<comment type="function">
    <text evidence="1 3">CBASS (cyclic oligonucleotide-based antiphage signaling system) provides immunity against bacteriophage. The CD-NTase protein synthesizes cyclic nucleotides in response to infection; these serve as specific second messenger signals. The signals activate a diverse range of effectors, leading to bacterial cell death and thus abortive phage infection. A type III-C(AAA) CBASS system (PubMed:32839535).</text>
</comment>
<comment type="function">
    <text evidence="1">A member of the CBASS system in this bacteria. It does not seem to bind a closure peptide, its exact function is unknown.</text>
</comment>
<comment type="subunit">
    <text evidence="1">Interacts with Cap7 (also called HORMA2) and CdnC; forms CdnD:Cap7:Cap8 (also called CdnD:HORMA2:HORMA3) complexes with stoichiometries of 1:1:1 and 2:1:1.</text>
</comment>
<comment type="domain">
    <text evidence="1">Does not seem to be able to assume a closed conformation, does not bind closure peptide. In the Cap7:Cap8 complex only Cap7 binds a closure peptide.</text>
</comment>
<comment type="similarity">
    <text evidence="4">Belongs to the bacterial HORMA family. HORMA3 subfamily.</text>
</comment>
<evidence type="ECO:0000269" key="1">
    <source>
    </source>
</evidence>
<evidence type="ECO:0000303" key="2">
    <source>
    </source>
</evidence>
<evidence type="ECO:0000303" key="3">
    <source>
    </source>
</evidence>
<evidence type="ECO:0000305" key="4">
    <source>
    </source>
</evidence>
<evidence type="ECO:0007744" key="5">
    <source>
        <dbReference type="PDB" id="6P8P"/>
    </source>
</evidence>
<evidence type="ECO:0007744" key="6">
    <source>
        <dbReference type="PDB" id="6P8S"/>
    </source>
</evidence>
<evidence type="ECO:0007829" key="7">
    <source>
        <dbReference type="PDB" id="6P8P"/>
    </source>
</evidence>
<evidence type="ECO:0007829" key="8">
    <source>
        <dbReference type="PDB" id="6P8S"/>
    </source>
</evidence>
<proteinExistence type="evidence at protein level"/>
<feature type="chain" id="PRO_0000451842" description="CD-NTase-associated protein 8">
    <location>
        <begin position="1"/>
        <end position="156"/>
    </location>
</feature>
<feature type="strand" evidence="7">
    <location>
        <begin position="4"/>
        <end position="10"/>
    </location>
</feature>
<feature type="turn" evidence="7">
    <location>
        <begin position="12"/>
        <end position="14"/>
    </location>
</feature>
<feature type="helix" evidence="7">
    <location>
        <begin position="17"/>
        <end position="29"/>
    </location>
</feature>
<feature type="helix" evidence="7">
    <location>
        <begin position="35"/>
        <end position="42"/>
    </location>
</feature>
<feature type="helix" evidence="7">
    <location>
        <begin position="44"/>
        <end position="52"/>
    </location>
</feature>
<feature type="helix" evidence="7">
    <location>
        <begin position="55"/>
        <end position="57"/>
    </location>
</feature>
<feature type="strand" evidence="7">
    <location>
        <begin position="61"/>
        <end position="64"/>
    </location>
</feature>
<feature type="strand" evidence="7">
    <location>
        <begin position="69"/>
        <end position="75"/>
    </location>
</feature>
<feature type="helix" evidence="7">
    <location>
        <begin position="77"/>
        <end position="82"/>
    </location>
</feature>
<feature type="strand" evidence="7">
    <location>
        <begin position="101"/>
        <end position="106"/>
    </location>
</feature>
<feature type="helix" evidence="7">
    <location>
        <begin position="108"/>
        <end position="110"/>
    </location>
</feature>
<feature type="helix" evidence="7">
    <location>
        <begin position="111"/>
        <end position="119"/>
    </location>
</feature>
<feature type="strand" evidence="7">
    <location>
        <begin position="123"/>
        <end position="129"/>
    </location>
</feature>
<feature type="helix" evidence="8">
    <location>
        <begin position="130"/>
        <end position="132"/>
    </location>
</feature>
<organism>
    <name type="scientific">Pseudomonas aeruginosa</name>
    <dbReference type="NCBI Taxonomy" id="287"/>
    <lineage>
        <taxon>Bacteria</taxon>
        <taxon>Pseudomonadati</taxon>
        <taxon>Pseudomonadota</taxon>
        <taxon>Gammaproteobacteria</taxon>
        <taxon>Pseudomonadales</taxon>
        <taxon>Pseudomonadaceae</taxon>
        <taxon>Pseudomonas</taxon>
    </lineage>
</organism>
<protein>
    <recommendedName>
        <fullName evidence="3">CD-NTase-associated protein 8</fullName>
        <shortName evidence="3">Cap8</shortName>
    </recommendedName>
    <alternativeName>
        <fullName evidence="2">Bacterial HORMA3 protein</fullName>
    </alternativeName>
</protein>
<dbReference type="EMBL" id="CP015117">
    <property type="protein sequence ID" value="AMX91004.1"/>
    <property type="molecule type" value="Genomic_DNA"/>
</dbReference>
<dbReference type="RefSeq" id="WP_003090160.1">
    <property type="nucleotide sequence ID" value="NZ_WXZT01000006.1"/>
</dbReference>
<dbReference type="PDB" id="6P8P">
    <property type="method" value="X-ray"/>
    <property type="resolution" value="1.64 A"/>
    <property type="chains" value="A/B/C/D=2-134"/>
</dbReference>
<dbReference type="PDB" id="6P8S">
    <property type="method" value="X-ray"/>
    <property type="resolution" value="2.00 A"/>
    <property type="chains" value="C/D=2-133"/>
</dbReference>
<dbReference type="PDBsum" id="6P8P"/>
<dbReference type="PDBsum" id="6P8S"/>
<dbReference type="SMR" id="P0DTF5"/>
<dbReference type="GeneID" id="94693642"/>
<dbReference type="GO" id="GO:0051607">
    <property type="term" value="P:defense response to virus"/>
    <property type="evidence" value="ECO:0007669"/>
    <property type="project" value="UniProtKB-KW"/>
</dbReference>
<keyword id="KW-0002">3D-structure</keyword>
<keyword id="KW-0051">Antiviral defense</keyword>
<sequence>MTTVVSRTFRSSPHRDALQTWDAIVELLTQGKDGTARSELRAVTGVAASLIADQAPKSAPIVATCDGPRTRIYCLFDEDAIDGDDANEEVLGFEPLKGDWGVSLPCPKEQLGWVQSALKKHSSRIIARDLSQGIATQAQADAGQALSLDLGGFLKS</sequence>
<accession>P0DTF5</accession>
<gene>
    <name evidence="3" type="primary">cap8</name>
    <name evidence="2" type="synonym">HORMA3</name>
    <name type="ORF">A4W92_29525</name>
</gene>
<reference key="1">
    <citation type="journal article" date="2016" name="Antimicrob. Agents Chemother.">
        <title>Dynamics of Mutations during Development of Resistance by Pseudomonas aeruginosa against Five Antibiotics.</title>
        <authorList>
            <person name="Feng Y."/>
            <person name="Jonker M.J."/>
            <person name="Moustakas I."/>
            <person name="Brul S."/>
            <person name="Ter Kuile B.H."/>
        </authorList>
    </citation>
    <scope>NUCLEOTIDE SEQUENCE [LARGE SCALE GENOMIC DNA]</scope>
    <source>
        <strain>ATCC 27853 / DSM 1117 / CIP 76.110 / JCM 6119 / LMG 6395 / NCIMB 12469</strain>
    </source>
</reference>
<reference key="2">
    <citation type="journal article" date="2020" name="Nat. Microbiol.">
        <title>Diversity and classification of cyclic-oligonucleotide-based anti-phage signalling systems.</title>
        <authorList>
            <person name="Millman A."/>
            <person name="Melamed S."/>
            <person name="Amitai G."/>
            <person name="Sorek R."/>
        </authorList>
    </citation>
    <scope>CLASSIFICATION AND NOMENCLATURE</scope>
</reference>
<reference evidence="5 6" key="3">
    <citation type="journal article" date="2020" name="Mol. Cell">
        <title>HORMA Domain Proteins and a Trip13-like ATPase Regulate Bacterial cGAS-like Enzymes to Mediate Bacteriophage Immunity.</title>
        <authorList>
            <person name="Ye Q."/>
            <person name="Lau R.K."/>
            <person name="Mathews I.T."/>
            <person name="Birkholz E.A."/>
            <person name="Watrous J.D."/>
            <person name="Azimi C.S."/>
            <person name="Pogliano J."/>
            <person name="Jain M."/>
            <person name="Corbett K.D."/>
        </authorList>
    </citation>
    <scope>X-RAY CRYSTALLOGRAPHY (1.64 ANGSTROMS) OF 2-133 ALONE AND IN COMPLEX WITH CAP7</scope>
    <scope>FUNCTION</scope>
    <scope>SUBUNIT</scope>
    <scope>DOMAIN</scope>
    <source>
        <strain>ATCC 27853 / DSM 1117 / CIP 76.110 / JCM 6119 / LMG 6395 / NCIMB 12469</strain>
    </source>
</reference>
<name>CAP8_PSEAI</name>